<reference key="1">
    <citation type="journal article" date="2000" name="Nature">
        <title>Sequence and analysis of chromosome 1 of the plant Arabidopsis thaliana.</title>
        <authorList>
            <person name="Theologis A."/>
            <person name="Ecker J.R."/>
            <person name="Palm C.J."/>
            <person name="Federspiel N.A."/>
            <person name="Kaul S."/>
            <person name="White O."/>
            <person name="Alonso J."/>
            <person name="Altafi H."/>
            <person name="Araujo R."/>
            <person name="Bowman C.L."/>
            <person name="Brooks S.Y."/>
            <person name="Buehler E."/>
            <person name="Chan A."/>
            <person name="Chao Q."/>
            <person name="Chen H."/>
            <person name="Cheuk R.F."/>
            <person name="Chin C.W."/>
            <person name="Chung M.K."/>
            <person name="Conn L."/>
            <person name="Conway A.B."/>
            <person name="Conway A.R."/>
            <person name="Creasy T.H."/>
            <person name="Dewar K."/>
            <person name="Dunn P."/>
            <person name="Etgu P."/>
            <person name="Feldblyum T.V."/>
            <person name="Feng J.-D."/>
            <person name="Fong B."/>
            <person name="Fujii C.Y."/>
            <person name="Gill J.E."/>
            <person name="Goldsmith A.D."/>
            <person name="Haas B."/>
            <person name="Hansen N.F."/>
            <person name="Hughes B."/>
            <person name="Huizar L."/>
            <person name="Hunter J.L."/>
            <person name="Jenkins J."/>
            <person name="Johnson-Hopson C."/>
            <person name="Khan S."/>
            <person name="Khaykin E."/>
            <person name="Kim C.J."/>
            <person name="Koo H.L."/>
            <person name="Kremenetskaia I."/>
            <person name="Kurtz D.B."/>
            <person name="Kwan A."/>
            <person name="Lam B."/>
            <person name="Langin-Hooper S."/>
            <person name="Lee A."/>
            <person name="Lee J.M."/>
            <person name="Lenz C.A."/>
            <person name="Li J.H."/>
            <person name="Li Y.-P."/>
            <person name="Lin X."/>
            <person name="Liu S.X."/>
            <person name="Liu Z.A."/>
            <person name="Luros J.S."/>
            <person name="Maiti R."/>
            <person name="Marziali A."/>
            <person name="Militscher J."/>
            <person name="Miranda M."/>
            <person name="Nguyen M."/>
            <person name="Nierman W.C."/>
            <person name="Osborne B.I."/>
            <person name="Pai G."/>
            <person name="Peterson J."/>
            <person name="Pham P.K."/>
            <person name="Rizzo M."/>
            <person name="Rooney T."/>
            <person name="Rowley D."/>
            <person name="Sakano H."/>
            <person name="Salzberg S.L."/>
            <person name="Schwartz J.R."/>
            <person name="Shinn P."/>
            <person name="Southwick A.M."/>
            <person name="Sun H."/>
            <person name="Tallon L.J."/>
            <person name="Tambunga G."/>
            <person name="Toriumi M.J."/>
            <person name="Town C.D."/>
            <person name="Utterback T."/>
            <person name="Van Aken S."/>
            <person name="Vaysberg M."/>
            <person name="Vysotskaia V.S."/>
            <person name="Walker M."/>
            <person name="Wu D."/>
            <person name="Yu G."/>
            <person name="Fraser C.M."/>
            <person name="Venter J.C."/>
            <person name="Davis R.W."/>
        </authorList>
    </citation>
    <scope>NUCLEOTIDE SEQUENCE [LARGE SCALE GENOMIC DNA]</scope>
    <source>
        <strain>cv. Columbia</strain>
    </source>
</reference>
<reference key="2">
    <citation type="journal article" date="2017" name="Plant J.">
        <title>Araport11: a complete reannotation of the Arabidopsis thaliana reference genome.</title>
        <authorList>
            <person name="Cheng C.Y."/>
            <person name="Krishnakumar V."/>
            <person name="Chan A.P."/>
            <person name="Thibaud-Nissen F."/>
            <person name="Schobel S."/>
            <person name="Town C.D."/>
        </authorList>
    </citation>
    <scope>GENOME REANNOTATION</scope>
    <source>
        <strain>cv. Columbia</strain>
    </source>
</reference>
<reference key="3">
    <citation type="journal article" date="2014" name="Proc. Natl. Acad. Sci. U.S.A.">
        <title>The Golgi localized bifunctional UDP-rhamnose/UDP-galactose transporter family of Arabidopsis.</title>
        <authorList>
            <person name="Rautengarten C."/>
            <person name="Ebert B."/>
            <person name="Moreno I."/>
            <person name="Temple H."/>
            <person name="Herter T."/>
            <person name="Link B."/>
            <person name="Donas-Cofre D."/>
            <person name="Moreno A."/>
            <person name="Saez-Aguayo S."/>
            <person name="Blanco F."/>
            <person name="Mortimer J.C."/>
            <person name="Schultink A."/>
            <person name="Reiter W.D."/>
            <person name="Dupree P."/>
            <person name="Pauly M."/>
            <person name="Heazlewood J.L."/>
            <person name="Scheller H.V."/>
            <person name="Orellana A."/>
        </authorList>
    </citation>
    <scope>GENE FAMILY</scope>
</reference>
<accession>Q9LNH5</accession>
<accession>Q9SX58</accession>
<keyword id="KW-0472">Membrane</keyword>
<keyword id="KW-1185">Reference proteome</keyword>
<keyword id="KW-0762">Sugar transport</keyword>
<keyword id="KW-0812">Transmembrane</keyword>
<keyword id="KW-1133">Transmembrane helix</keyword>
<keyword id="KW-0813">Transport</keyword>
<protein>
    <recommendedName>
        <fullName>Probable sugar phosphate/phosphate translocator At1g48230</fullName>
    </recommendedName>
</protein>
<feature type="chain" id="PRO_0000406107" description="Probable sugar phosphate/phosphate translocator At1g48230">
    <location>
        <begin position="1"/>
        <end position="367"/>
    </location>
</feature>
<feature type="transmembrane region" description="Helical" evidence="1">
    <location>
        <begin position="9"/>
        <end position="29"/>
    </location>
</feature>
<feature type="transmembrane region" description="Helical" evidence="1">
    <location>
        <begin position="43"/>
        <end position="63"/>
    </location>
</feature>
<feature type="transmembrane region" description="Helical" evidence="1">
    <location>
        <begin position="76"/>
        <end position="96"/>
    </location>
</feature>
<feature type="transmembrane region" description="Helical" evidence="1">
    <location>
        <begin position="106"/>
        <end position="126"/>
    </location>
</feature>
<feature type="transmembrane region" description="Helical" evidence="1">
    <location>
        <begin position="140"/>
        <end position="160"/>
    </location>
</feature>
<feature type="transmembrane region" description="Helical" evidence="1">
    <location>
        <begin position="163"/>
        <end position="183"/>
    </location>
</feature>
<feature type="transmembrane region" description="Helical" evidence="1">
    <location>
        <begin position="193"/>
        <end position="213"/>
    </location>
</feature>
<feature type="transmembrane region" description="Helical" evidence="1">
    <location>
        <begin position="229"/>
        <end position="249"/>
    </location>
</feature>
<feature type="transmembrane region" description="Helical" evidence="1">
    <location>
        <begin position="257"/>
        <end position="276"/>
    </location>
</feature>
<feature type="transmembrane region" description="Helical" evidence="1">
    <location>
        <begin position="280"/>
        <end position="302"/>
    </location>
</feature>
<feature type="region of interest" description="Disordered" evidence="2">
    <location>
        <begin position="321"/>
        <end position="341"/>
    </location>
</feature>
<feature type="compositionally biased region" description="Basic and acidic residues" evidence="2">
    <location>
        <begin position="321"/>
        <end position="330"/>
    </location>
</feature>
<evidence type="ECO:0000255" key="1"/>
<evidence type="ECO:0000256" key="2">
    <source>
        <dbReference type="SAM" id="MobiDB-lite"/>
    </source>
</evidence>
<evidence type="ECO:0000305" key="3"/>
<organism>
    <name type="scientific">Arabidopsis thaliana</name>
    <name type="common">Mouse-ear cress</name>
    <dbReference type="NCBI Taxonomy" id="3702"/>
    <lineage>
        <taxon>Eukaryota</taxon>
        <taxon>Viridiplantae</taxon>
        <taxon>Streptophyta</taxon>
        <taxon>Embryophyta</taxon>
        <taxon>Tracheophyta</taxon>
        <taxon>Spermatophyta</taxon>
        <taxon>Magnoliopsida</taxon>
        <taxon>eudicotyledons</taxon>
        <taxon>Gunneridae</taxon>
        <taxon>Pentapetalae</taxon>
        <taxon>rosids</taxon>
        <taxon>malvids</taxon>
        <taxon>Brassicales</taxon>
        <taxon>Brassicaceae</taxon>
        <taxon>Camelineae</taxon>
        <taxon>Arabidopsis</taxon>
    </lineage>
</organism>
<proteinExistence type="evidence at transcript level"/>
<name>PT148_ARATH</name>
<gene>
    <name type="ordered locus">At1g48230</name>
    <name type="ORF">F11A17.21</name>
    <name type="ORF">F21D18.5</name>
</gene>
<sequence length="367" mass="40792">MAKMINKTLVLTYIYLLIYIILSSGVILYNKWVLSPKYFNFPLPITLTMIHMGFSGFVAFLLIRVFKVVSPVKMTFEIYVTCVVPISAFFASSLWFGNTAYLHISVAFIQMLKALMPVATFLMAVVCGTDKARCDVFMNMVLVSVGVVVSSYGEINFNVIGTVYQVMGIFAEALRLVLTQVLLQKKGLTLNPVTSLYYIAPCSFVFLSLPWYVLEKPNIDVSQIQFNFWIFFSNALCALALNFSIFLVIGRTGAVTIRVAGVLKDWILIALSTVIFPESTITGLNITGYAIALCGVVMYNYIKIKDVKAIQPTTDSLPDRITKDWKEKNSSDGGSPRGLELNDEEAPLITSRLSHIGRTQLGNHTAV</sequence>
<comment type="subcellular location">
    <subcellularLocation>
        <location evidence="3">Membrane</location>
        <topology evidence="3">Multi-pass membrane protein</topology>
    </subcellularLocation>
</comment>
<comment type="similarity">
    <text evidence="3">Belongs to the TPT transporter family. TPT (TC 2.A.7.9) subfamily.</text>
</comment>
<comment type="sequence caution" evidence="3">
    <conflict type="erroneous gene model prediction">
        <sequence resource="EMBL-CDS" id="AAD49773"/>
    </conflict>
</comment>
<comment type="sequence caution" evidence="3">
    <conflict type="erroneous gene model prediction">
        <sequence resource="EMBL-CDS" id="AAF79542"/>
    </conflict>
</comment>
<dbReference type="EMBL" id="AC007932">
    <property type="protein sequence ID" value="AAD49773.1"/>
    <property type="status" value="ALT_SEQ"/>
    <property type="molecule type" value="Genomic_DNA"/>
</dbReference>
<dbReference type="EMBL" id="AC023673">
    <property type="protein sequence ID" value="AAF79542.1"/>
    <property type="status" value="ALT_SEQ"/>
    <property type="molecule type" value="Genomic_DNA"/>
</dbReference>
<dbReference type="EMBL" id="CP002684">
    <property type="protein sequence ID" value="AEE32267.1"/>
    <property type="molecule type" value="Genomic_DNA"/>
</dbReference>
<dbReference type="PIR" id="B96522">
    <property type="entry name" value="B96522"/>
</dbReference>
<dbReference type="RefSeq" id="NP_175257.1">
    <property type="nucleotide sequence ID" value="NM_103720.4"/>
</dbReference>
<dbReference type="SMR" id="Q9LNH5"/>
<dbReference type="FunCoup" id="Q9LNH5">
    <property type="interactions" value="1105"/>
</dbReference>
<dbReference type="STRING" id="3702.Q9LNH5"/>
<dbReference type="SwissPalm" id="Q9LNH5"/>
<dbReference type="PaxDb" id="3702-AT1G48230.1"/>
<dbReference type="ProteomicsDB" id="248836"/>
<dbReference type="EnsemblPlants" id="AT1G48230.1">
    <property type="protein sequence ID" value="AT1G48230.1"/>
    <property type="gene ID" value="AT1G48230"/>
</dbReference>
<dbReference type="GeneID" id="841243"/>
<dbReference type="Gramene" id="AT1G48230.1">
    <property type="protein sequence ID" value="AT1G48230.1"/>
    <property type="gene ID" value="AT1G48230"/>
</dbReference>
<dbReference type="KEGG" id="ath:AT1G48230"/>
<dbReference type="Araport" id="AT1G48230"/>
<dbReference type="TAIR" id="AT1G48230"/>
<dbReference type="eggNOG" id="KOG1441">
    <property type="taxonomic scope" value="Eukaryota"/>
</dbReference>
<dbReference type="HOGENOM" id="CLU_022332_3_2_1"/>
<dbReference type="InParanoid" id="Q9LNH5"/>
<dbReference type="OMA" id="PWYLLEM"/>
<dbReference type="OrthoDB" id="6418713at2759"/>
<dbReference type="PhylomeDB" id="Q9LNH5"/>
<dbReference type="PRO" id="PR:Q9LNH5"/>
<dbReference type="Proteomes" id="UP000006548">
    <property type="component" value="Chromosome 1"/>
</dbReference>
<dbReference type="ExpressionAtlas" id="Q9LNH5">
    <property type="expression patterns" value="baseline and differential"/>
</dbReference>
<dbReference type="GO" id="GO:0005768">
    <property type="term" value="C:endosome"/>
    <property type="evidence" value="ECO:0007005"/>
    <property type="project" value="TAIR"/>
</dbReference>
<dbReference type="GO" id="GO:0005794">
    <property type="term" value="C:Golgi apparatus"/>
    <property type="evidence" value="ECO:0007005"/>
    <property type="project" value="TAIR"/>
</dbReference>
<dbReference type="GO" id="GO:0016020">
    <property type="term" value="C:membrane"/>
    <property type="evidence" value="ECO:0007669"/>
    <property type="project" value="UniProtKB-SubCell"/>
</dbReference>
<dbReference type="GO" id="GO:0005802">
    <property type="term" value="C:trans-Golgi network"/>
    <property type="evidence" value="ECO:0007005"/>
    <property type="project" value="TAIR"/>
</dbReference>
<dbReference type="InterPro" id="IPR004853">
    <property type="entry name" value="Sugar_P_trans_dom"/>
</dbReference>
<dbReference type="InterPro" id="IPR050186">
    <property type="entry name" value="TPT_transporter"/>
</dbReference>
<dbReference type="PANTHER" id="PTHR11132">
    <property type="entry name" value="SOLUTE CARRIER FAMILY 35"/>
    <property type="match status" value="1"/>
</dbReference>
<dbReference type="Pfam" id="PF03151">
    <property type="entry name" value="TPT"/>
    <property type="match status" value="1"/>
</dbReference>